<organism>
    <name type="scientific">Crocosphaera subtropica (strain ATCC 51142 / BH68)</name>
    <name type="common">Cyanothece sp. (strain ATCC 51142)</name>
    <dbReference type="NCBI Taxonomy" id="43989"/>
    <lineage>
        <taxon>Bacteria</taxon>
        <taxon>Bacillati</taxon>
        <taxon>Cyanobacteriota</taxon>
        <taxon>Cyanophyceae</taxon>
        <taxon>Oscillatoriophycideae</taxon>
        <taxon>Chroococcales</taxon>
        <taxon>Aphanothecaceae</taxon>
        <taxon>Crocosphaera</taxon>
        <taxon>Crocosphaera subtropica</taxon>
    </lineage>
</organism>
<feature type="chain" id="PRO_1000097947" description="ATP-dependent Clp protease ATP-binding subunit ClpX">
    <location>
        <begin position="1"/>
        <end position="435"/>
    </location>
</feature>
<feature type="domain" description="ClpX-type ZB" evidence="2">
    <location>
        <begin position="1"/>
        <end position="51"/>
    </location>
</feature>
<feature type="binding site" evidence="2">
    <location>
        <position position="10"/>
    </location>
    <ligand>
        <name>Zn(2+)</name>
        <dbReference type="ChEBI" id="CHEBI:29105"/>
    </ligand>
</feature>
<feature type="binding site" evidence="2">
    <location>
        <position position="13"/>
    </location>
    <ligand>
        <name>Zn(2+)</name>
        <dbReference type="ChEBI" id="CHEBI:29105"/>
    </ligand>
</feature>
<feature type="binding site" evidence="2">
    <location>
        <position position="32"/>
    </location>
    <ligand>
        <name>Zn(2+)</name>
        <dbReference type="ChEBI" id="CHEBI:29105"/>
    </ligand>
</feature>
<feature type="binding site" evidence="2">
    <location>
        <position position="35"/>
    </location>
    <ligand>
        <name>Zn(2+)</name>
        <dbReference type="ChEBI" id="CHEBI:29105"/>
    </ligand>
</feature>
<feature type="binding site" evidence="1">
    <location>
        <begin position="132"/>
        <end position="139"/>
    </location>
    <ligand>
        <name>ATP</name>
        <dbReference type="ChEBI" id="CHEBI:30616"/>
    </ligand>
</feature>
<reference key="1">
    <citation type="journal article" date="2008" name="Proc. Natl. Acad. Sci. U.S.A.">
        <title>The genome of Cyanothece 51142, a unicellular diazotrophic cyanobacterium important in the marine nitrogen cycle.</title>
        <authorList>
            <person name="Welsh E.A."/>
            <person name="Liberton M."/>
            <person name="Stoeckel J."/>
            <person name="Loh T."/>
            <person name="Elvitigala T."/>
            <person name="Wang C."/>
            <person name="Wollam A."/>
            <person name="Fulton R.S."/>
            <person name="Clifton S.W."/>
            <person name="Jacobs J.M."/>
            <person name="Aurora R."/>
            <person name="Ghosh B.K."/>
            <person name="Sherman L.A."/>
            <person name="Smith R.D."/>
            <person name="Wilson R.K."/>
            <person name="Pakrasi H.B."/>
        </authorList>
    </citation>
    <scope>NUCLEOTIDE SEQUENCE [LARGE SCALE GENOMIC DNA]</scope>
    <source>
        <strain>ATCC 51142 / BH68</strain>
    </source>
</reference>
<evidence type="ECO:0000255" key="1">
    <source>
        <dbReference type="HAMAP-Rule" id="MF_00175"/>
    </source>
</evidence>
<evidence type="ECO:0000255" key="2">
    <source>
        <dbReference type="PROSITE-ProRule" id="PRU01250"/>
    </source>
</evidence>
<proteinExistence type="inferred from homology"/>
<accession>B1WUD2</accession>
<comment type="function">
    <text evidence="1">ATP-dependent specificity component of the Clp protease. It directs the protease to specific substrates. Can perform chaperone functions in the absence of ClpP.</text>
</comment>
<comment type="subunit">
    <text evidence="1">Component of the ClpX-ClpP complex. Forms a hexameric ring that, in the presence of ATP, binds to fourteen ClpP subunits assembled into a disk-like structure with a central cavity, resembling the structure of eukaryotic proteasomes.</text>
</comment>
<comment type="similarity">
    <text evidence="1">Belongs to the ClpX chaperone family.</text>
</comment>
<keyword id="KW-0067">ATP-binding</keyword>
<keyword id="KW-0143">Chaperone</keyword>
<keyword id="KW-0479">Metal-binding</keyword>
<keyword id="KW-0547">Nucleotide-binding</keyword>
<keyword id="KW-1185">Reference proteome</keyword>
<keyword id="KW-0862">Zinc</keyword>
<sequence length="435" mass="48463">MSKYDSHLKCSFCGKSQEQVRKLIAGPGVYICDECVELCNEILDEELIRPDGPMTKEPVRPGNPKTRTSLKELPKPMEIKDYLDEYVIGQDEAKKVLSVAVYNHYKRLSLVQGKNDEDNIELQKSNILLMGPTGSGKTLLAQTLAQVLEVPFAVADATTLTEAGYVGEDVENILLRLLQVADLDVEEAQRGIIYIDEIDKIARKSENPSITRDVSGEGVQQALLKMLEGTVANVPPQGGRKHPYQDCIQIDTSNILFICGGAFVGLERVIEQRIGKKSMGFVRPGEGQSKEKRAADLMQRVEPDDLVKFGMIPEFVGRIPVMAALNPLTEETLVAILTKPRNALVKQYQKLLNMDNVELEFSQEAVKAIAQEAYRRKTGARALRGIVEELMLDVMYELPSRKDVQKCMITKEMVEQRSTSELLLHPSSMVTPESA</sequence>
<dbReference type="EMBL" id="CP000806">
    <property type="protein sequence ID" value="ACB53786.1"/>
    <property type="molecule type" value="Genomic_DNA"/>
</dbReference>
<dbReference type="RefSeq" id="WP_009543506.1">
    <property type="nucleotide sequence ID" value="NC_010546.1"/>
</dbReference>
<dbReference type="SMR" id="B1WUD2"/>
<dbReference type="STRING" id="43989.cce_4438"/>
<dbReference type="KEGG" id="cyt:cce_4438"/>
<dbReference type="eggNOG" id="COG1219">
    <property type="taxonomic scope" value="Bacteria"/>
</dbReference>
<dbReference type="HOGENOM" id="CLU_014218_8_2_3"/>
<dbReference type="OrthoDB" id="9804062at2"/>
<dbReference type="Proteomes" id="UP000001203">
    <property type="component" value="Chromosome circular"/>
</dbReference>
<dbReference type="GO" id="GO:0009376">
    <property type="term" value="C:HslUV protease complex"/>
    <property type="evidence" value="ECO:0007669"/>
    <property type="project" value="TreeGrafter"/>
</dbReference>
<dbReference type="GO" id="GO:0005524">
    <property type="term" value="F:ATP binding"/>
    <property type="evidence" value="ECO:0007669"/>
    <property type="project" value="UniProtKB-UniRule"/>
</dbReference>
<dbReference type="GO" id="GO:0016887">
    <property type="term" value="F:ATP hydrolysis activity"/>
    <property type="evidence" value="ECO:0007669"/>
    <property type="project" value="InterPro"/>
</dbReference>
<dbReference type="GO" id="GO:0140662">
    <property type="term" value="F:ATP-dependent protein folding chaperone"/>
    <property type="evidence" value="ECO:0007669"/>
    <property type="project" value="InterPro"/>
</dbReference>
<dbReference type="GO" id="GO:0046983">
    <property type="term" value="F:protein dimerization activity"/>
    <property type="evidence" value="ECO:0007669"/>
    <property type="project" value="InterPro"/>
</dbReference>
<dbReference type="GO" id="GO:0051082">
    <property type="term" value="F:unfolded protein binding"/>
    <property type="evidence" value="ECO:0007669"/>
    <property type="project" value="UniProtKB-UniRule"/>
</dbReference>
<dbReference type="GO" id="GO:0008270">
    <property type="term" value="F:zinc ion binding"/>
    <property type="evidence" value="ECO:0007669"/>
    <property type="project" value="InterPro"/>
</dbReference>
<dbReference type="GO" id="GO:0051301">
    <property type="term" value="P:cell division"/>
    <property type="evidence" value="ECO:0007669"/>
    <property type="project" value="TreeGrafter"/>
</dbReference>
<dbReference type="GO" id="GO:0051603">
    <property type="term" value="P:proteolysis involved in protein catabolic process"/>
    <property type="evidence" value="ECO:0007669"/>
    <property type="project" value="TreeGrafter"/>
</dbReference>
<dbReference type="CDD" id="cd19497">
    <property type="entry name" value="RecA-like_ClpX"/>
    <property type="match status" value="1"/>
</dbReference>
<dbReference type="FunFam" id="1.10.8.60:FF:000002">
    <property type="entry name" value="ATP-dependent Clp protease ATP-binding subunit ClpX"/>
    <property type="match status" value="1"/>
</dbReference>
<dbReference type="FunFam" id="3.40.50.300:FF:000005">
    <property type="entry name" value="ATP-dependent Clp protease ATP-binding subunit ClpX"/>
    <property type="match status" value="1"/>
</dbReference>
<dbReference type="Gene3D" id="1.10.8.60">
    <property type="match status" value="1"/>
</dbReference>
<dbReference type="Gene3D" id="6.20.220.10">
    <property type="entry name" value="ClpX chaperone, C4-type zinc finger domain"/>
    <property type="match status" value="1"/>
</dbReference>
<dbReference type="Gene3D" id="3.40.50.300">
    <property type="entry name" value="P-loop containing nucleotide triphosphate hydrolases"/>
    <property type="match status" value="1"/>
</dbReference>
<dbReference type="HAMAP" id="MF_00175">
    <property type="entry name" value="ClpX"/>
    <property type="match status" value="1"/>
</dbReference>
<dbReference type="InterPro" id="IPR003593">
    <property type="entry name" value="AAA+_ATPase"/>
</dbReference>
<dbReference type="InterPro" id="IPR050052">
    <property type="entry name" value="ATP-dep_Clp_protease_ClpX"/>
</dbReference>
<dbReference type="InterPro" id="IPR003959">
    <property type="entry name" value="ATPase_AAA_core"/>
</dbReference>
<dbReference type="InterPro" id="IPR019489">
    <property type="entry name" value="Clp_ATPase_C"/>
</dbReference>
<dbReference type="InterPro" id="IPR004487">
    <property type="entry name" value="Clp_protease_ATP-bd_su_ClpX"/>
</dbReference>
<dbReference type="InterPro" id="IPR046425">
    <property type="entry name" value="ClpX_bact"/>
</dbReference>
<dbReference type="InterPro" id="IPR027417">
    <property type="entry name" value="P-loop_NTPase"/>
</dbReference>
<dbReference type="InterPro" id="IPR010603">
    <property type="entry name" value="Znf_CppX_C4"/>
</dbReference>
<dbReference type="InterPro" id="IPR038366">
    <property type="entry name" value="Znf_CppX_C4_sf"/>
</dbReference>
<dbReference type="NCBIfam" id="TIGR00382">
    <property type="entry name" value="clpX"/>
    <property type="match status" value="1"/>
</dbReference>
<dbReference type="NCBIfam" id="NF003745">
    <property type="entry name" value="PRK05342.1"/>
    <property type="match status" value="1"/>
</dbReference>
<dbReference type="PANTHER" id="PTHR48102:SF7">
    <property type="entry name" value="ATP-DEPENDENT CLP PROTEASE ATP-BINDING SUBUNIT CLPX-LIKE, MITOCHONDRIAL"/>
    <property type="match status" value="1"/>
</dbReference>
<dbReference type="PANTHER" id="PTHR48102">
    <property type="entry name" value="ATP-DEPENDENT CLP PROTEASE ATP-BINDING SUBUNIT CLPX-LIKE, MITOCHONDRIAL-RELATED"/>
    <property type="match status" value="1"/>
</dbReference>
<dbReference type="Pfam" id="PF07724">
    <property type="entry name" value="AAA_2"/>
    <property type="match status" value="1"/>
</dbReference>
<dbReference type="Pfam" id="PF10431">
    <property type="entry name" value="ClpB_D2-small"/>
    <property type="match status" value="1"/>
</dbReference>
<dbReference type="Pfam" id="PF06689">
    <property type="entry name" value="zf-C4_ClpX"/>
    <property type="match status" value="1"/>
</dbReference>
<dbReference type="SMART" id="SM00382">
    <property type="entry name" value="AAA"/>
    <property type="match status" value="1"/>
</dbReference>
<dbReference type="SMART" id="SM01086">
    <property type="entry name" value="ClpB_D2-small"/>
    <property type="match status" value="1"/>
</dbReference>
<dbReference type="SMART" id="SM00994">
    <property type="entry name" value="zf-C4_ClpX"/>
    <property type="match status" value="1"/>
</dbReference>
<dbReference type="SUPFAM" id="SSF57716">
    <property type="entry name" value="Glucocorticoid receptor-like (DNA-binding domain)"/>
    <property type="match status" value="1"/>
</dbReference>
<dbReference type="SUPFAM" id="SSF52540">
    <property type="entry name" value="P-loop containing nucleoside triphosphate hydrolases"/>
    <property type="match status" value="1"/>
</dbReference>
<dbReference type="PROSITE" id="PS51902">
    <property type="entry name" value="CLPX_ZB"/>
    <property type="match status" value="1"/>
</dbReference>
<gene>
    <name evidence="1" type="primary">clpX</name>
    <name type="ordered locus">cce_4438</name>
</gene>
<name>CLPX_CROS5</name>
<protein>
    <recommendedName>
        <fullName evidence="1">ATP-dependent Clp protease ATP-binding subunit ClpX</fullName>
    </recommendedName>
</protein>